<name>TM213_BOVIN</name>
<gene>
    <name type="primary">TMEM213</name>
</gene>
<dbReference type="EMBL" id="BT021852">
    <property type="protein sequence ID" value="AAX46699.1"/>
    <property type="status" value="ALT_INIT"/>
    <property type="molecule type" value="mRNA"/>
</dbReference>
<dbReference type="RefSeq" id="NP_001035603.1">
    <property type="nucleotide sequence ID" value="NM_001040513.1"/>
</dbReference>
<dbReference type="FunCoup" id="Q58CU5">
    <property type="interactions" value="1"/>
</dbReference>
<dbReference type="STRING" id="9913.ENSBTAP00000001999"/>
<dbReference type="GlyCosmos" id="Q58CU5">
    <property type="glycosylation" value="1 site, No reported glycans"/>
</dbReference>
<dbReference type="GlyGen" id="Q58CU5">
    <property type="glycosylation" value="1 site"/>
</dbReference>
<dbReference type="PaxDb" id="9913-ENSBTAP00000001999"/>
<dbReference type="GeneID" id="510137"/>
<dbReference type="KEGG" id="bta:510137"/>
<dbReference type="CTD" id="155006"/>
<dbReference type="eggNOG" id="ENOG502SA74">
    <property type="taxonomic scope" value="Eukaryota"/>
</dbReference>
<dbReference type="HOGENOM" id="CLU_143213_0_0_1"/>
<dbReference type="InParanoid" id="Q58CU5"/>
<dbReference type="OrthoDB" id="9949160at2759"/>
<dbReference type="TreeFam" id="TF336187"/>
<dbReference type="Proteomes" id="UP000009136">
    <property type="component" value="Unplaced"/>
</dbReference>
<dbReference type="GO" id="GO:0016020">
    <property type="term" value="C:membrane"/>
    <property type="evidence" value="ECO:0007669"/>
    <property type="project" value="UniProtKB-SubCell"/>
</dbReference>
<dbReference type="InterPro" id="IPR028121">
    <property type="entry name" value="TMEM213"/>
</dbReference>
<dbReference type="PANTHER" id="PTHR36293">
    <property type="entry name" value="TRANSMEMBRANE PROTEIN 213"/>
    <property type="match status" value="1"/>
</dbReference>
<dbReference type="PANTHER" id="PTHR36293:SF1">
    <property type="entry name" value="TRANSMEMBRANE PROTEIN 213"/>
    <property type="match status" value="1"/>
</dbReference>
<dbReference type="Pfam" id="PF15192">
    <property type="entry name" value="TMEM213"/>
    <property type="match status" value="1"/>
</dbReference>
<sequence length="108" mass="11885">MKRLHLAPWTSLVLGLAFLSFHPVYLAEASSGSNSTSTVHHPENLETLEQCPNVDFCPQAARCCHTGVDEYGWIAAAVGWSLLFLTLILLCVDKLMKLTPDESKDLQA</sequence>
<evidence type="ECO:0000255" key="1"/>
<evidence type="ECO:0000305" key="2"/>
<reference key="1">
    <citation type="journal article" date="2005" name="BMC Genomics">
        <title>Characterization of 954 bovine full-CDS cDNA sequences.</title>
        <authorList>
            <person name="Harhay G.P."/>
            <person name="Sonstegard T.S."/>
            <person name="Keele J.W."/>
            <person name="Heaton M.P."/>
            <person name="Clawson M.L."/>
            <person name="Snelling W.M."/>
            <person name="Wiedmann R.T."/>
            <person name="Van Tassell C.P."/>
            <person name="Smith T.P.L."/>
        </authorList>
    </citation>
    <scope>NUCLEOTIDE SEQUENCE [LARGE SCALE MRNA]</scope>
</reference>
<comment type="subcellular location">
    <subcellularLocation>
        <location evidence="2">Membrane</location>
        <topology evidence="2">Single-pass type I membrane protein</topology>
    </subcellularLocation>
</comment>
<comment type="sequence caution" evidence="2">
    <conflict type="erroneous initiation">
        <sequence resource="EMBL-CDS" id="AAX46699"/>
    </conflict>
    <text>Extended N-terminus.</text>
</comment>
<organism>
    <name type="scientific">Bos taurus</name>
    <name type="common">Bovine</name>
    <dbReference type="NCBI Taxonomy" id="9913"/>
    <lineage>
        <taxon>Eukaryota</taxon>
        <taxon>Metazoa</taxon>
        <taxon>Chordata</taxon>
        <taxon>Craniata</taxon>
        <taxon>Vertebrata</taxon>
        <taxon>Euteleostomi</taxon>
        <taxon>Mammalia</taxon>
        <taxon>Eutheria</taxon>
        <taxon>Laurasiatheria</taxon>
        <taxon>Artiodactyla</taxon>
        <taxon>Ruminantia</taxon>
        <taxon>Pecora</taxon>
        <taxon>Bovidae</taxon>
        <taxon>Bovinae</taxon>
        <taxon>Bos</taxon>
    </lineage>
</organism>
<accession>Q58CU5</accession>
<protein>
    <recommendedName>
        <fullName>Transmembrane protein 213</fullName>
    </recommendedName>
</protein>
<feature type="signal peptide" evidence="1">
    <location>
        <begin position="1"/>
        <end position="27"/>
    </location>
</feature>
<feature type="chain" id="PRO_0000337053" description="Transmembrane protein 213">
    <location>
        <begin position="28"/>
        <end position="108"/>
    </location>
</feature>
<feature type="topological domain" description="Extracellular" evidence="1">
    <location>
        <begin position="28"/>
        <end position="71"/>
    </location>
</feature>
<feature type="transmembrane region" description="Helical" evidence="1">
    <location>
        <begin position="72"/>
        <end position="92"/>
    </location>
</feature>
<feature type="topological domain" description="Cytoplasmic" evidence="1">
    <location>
        <begin position="93"/>
        <end position="108"/>
    </location>
</feature>
<feature type="glycosylation site" description="N-linked (GlcNAc...) asparagine" evidence="1">
    <location>
        <position position="34"/>
    </location>
</feature>
<proteinExistence type="inferred from homology"/>
<keyword id="KW-0325">Glycoprotein</keyword>
<keyword id="KW-0472">Membrane</keyword>
<keyword id="KW-1185">Reference proteome</keyword>
<keyword id="KW-0732">Signal</keyword>
<keyword id="KW-0812">Transmembrane</keyword>
<keyword id="KW-1133">Transmembrane helix</keyword>